<dbReference type="GO" id="GO:0005576">
    <property type="term" value="C:extracellular region"/>
    <property type="evidence" value="ECO:0007669"/>
    <property type="project" value="UniProtKB-SubCell"/>
</dbReference>
<dbReference type="GO" id="GO:0090729">
    <property type="term" value="F:toxin activity"/>
    <property type="evidence" value="ECO:0007669"/>
    <property type="project" value="UniProtKB-KW"/>
</dbReference>
<dbReference type="FunFam" id="3.10.100.10:FF:000087">
    <property type="entry name" value="Snaclec rhodocetin subunit delta"/>
    <property type="match status" value="1"/>
</dbReference>
<dbReference type="Gene3D" id="3.10.100.10">
    <property type="entry name" value="Mannose-Binding Protein A, subunit A"/>
    <property type="match status" value="1"/>
</dbReference>
<dbReference type="InterPro" id="IPR001304">
    <property type="entry name" value="C-type_lectin-like"/>
</dbReference>
<dbReference type="InterPro" id="IPR016186">
    <property type="entry name" value="C-type_lectin-like/link_sf"/>
</dbReference>
<dbReference type="InterPro" id="IPR050111">
    <property type="entry name" value="C-type_lectin/snaclec_domain"/>
</dbReference>
<dbReference type="InterPro" id="IPR018378">
    <property type="entry name" value="C-type_lectin_CS"/>
</dbReference>
<dbReference type="InterPro" id="IPR016187">
    <property type="entry name" value="CTDL_fold"/>
</dbReference>
<dbReference type="PANTHER" id="PTHR22803">
    <property type="entry name" value="MANNOSE, PHOSPHOLIPASE, LECTIN RECEPTOR RELATED"/>
    <property type="match status" value="1"/>
</dbReference>
<dbReference type="Pfam" id="PF00059">
    <property type="entry name" value="Lectin_C"/>
    <property type="match status" value="1"/>
</dbReference>
<dbReference type="SMART" id="SM00034">
    <property type="entry name" value="CLECT"/>
    <property type="match status" value="1"/>
</dbReference>
<dbReference type="SUPFAM" id="SSF56436">
    <property type="entry name" value="C-type lectin-like"/>
    <property type="match status" value="1"/>
</dbReference>
<dbReference type="PROSITE" id="PS00615">
    <property type="entry name" value="C_TYPE_LECTIN_1"/>
    <property type="match status" value="1"/>
</dbReference>
<dbReference type="PROSITE" id="PS50041">
    <property type="entry name" value="C_TYPE_LECTIN_2"/>
    <property type="match status" value="1"/>
</dbReference>
<accession>P81111</accession>
<sequence length="131" mass="15428">DCPSDWSSYDQYCYRVFKRIQTWEDAERFCSEQANDGHLVSIESAGEADFVTQLVSENIRSEKHYVWIGLRVQGKGQQCSSEWSDGSSVHYDNLQENKTRKCYGLEKRAEFRTWSNVYCGHEYPFVCKFXR</sequence>
<evidence type="ECO:0000255" key="1">
    <source>
        <dbReference type="PROSITE-ProRule" id="PRU00040"/>
    </source>
</evidence>
<evidence type="ECO:0000269" key="2">
    <source>
    </source>
</evidence>
<evidence type="ECO:0000269" key="3">
    <source>
    </source>
</evidence>
<evidence type="ECO:0000269" key="4">
    <source>
    </source>
</evidence>
<evidence type="ECO:0000269" key="5">
    <source>
    </source>
</evidence>
<evidence type="ECO:0000305" key="6"/>
<reference key="1">
    <citation type="journal article" date="1998" name="Thromb. Haemost.">
        <title>Alboaggregins A and B. Structure and interaction with human platelets.</title>
        <authorList>
            <person name="Kowalska M.A."/>
            <person name="Tan L."/>
            <person name="Holt J.C."/>
            <person name="Peng M."/>
            <person name="Karczewski J."/>
            <person name="Calvete J.J."/>
            <person name="Niewiarowski S."/>
        </authorList>
    </citation>
    <scope>PROTEIN SEQUENCE</scope>
    <scope>FUNCTION</scope>
    <source>
        <tissue>Venom</tissue>
    </source>
</reference>
<reference key="2">
    <citation type="journal article" date="1996" name="Biochemistry">
        <title>Binding of a novel 50-kilodalton alboaggregin from Trimeresurus albolabris and related viper venom proteins to the platelet membrane glycoprotein Ib-IX-V complex. Effect on platelet aggregation and glycoprotein Ib-mediated platelet activation.</title>
        <authorList>
            <person name="Andrews R.K."/>
            <person name="Kroll M.H."/>
            <person name="Ward C.M."/>
            <person name="Rose J.W."/>
            <person name="Scarborough R.M."/>
            <person name="Smith A.I."/>
            <person name="Lopez J.A."/>
            <person name="Berndt M.C."/>
        </authorList>
    </citation>
    <scope>PROTEIN SEQUENCE OF 1-18</scope>
    <scope>FUNCTION</scope>
    <scope>SUBCELLULAR LOCATION</scope>
    <scope>TISSUE SPECIFICITY</scope>
    <source>
        <tissue>Venom</tissue>
    </source>
</reference>
<reference key="3">
    <citation type="journal article" date="2001" name="Blood">
        <title>Alboaggregin A activates platelets by a mechanism involving glycoprotein VI as well as glycoprotein Ib.</title>
        <authorList>
            <person name="Dormann D."/>
            <person name="Clemetson J.M."/>
            <person name="Navdaev A."/>
            <person name="Kehrel B.E."/>
            <person name="Clemetson K.J."/>
        </authorList>
    </citation>
    <scope>PARTIAL PROTEIN SEQUENCE</scope>
    <scope>FUNCTION</scope>
    <source>
        <tissue>Venom</tissue>
    </source>
</reference>
<reference key="4">
    <citation type="journal article" date="2001" name="Blood">
        <title>The snake venom toxin alboaggregin-A activates glycoprotein VI.</title>
        <authorList>
            <person name="Asazuma N."/>
            <person name="Marshall S.J."/>
            <person name="Berlanga O."/>
            <person name="Snell D."/>
            <person name="Poole A.W."/>
            <person name="Berndt M.C."/>
            <person name="Andrews R.K."/>
            <person name="Watson S.P."/>
        </authorList>
    </citation>
    <scope>FUNCTION</scope>
    <source>
        <tissue>Venom</tissue>
    </source>
</reference>
<name>SLA1_TRIAB</name>
<organism>
    <name type="scientific">Trimeresurus albolabris</name>
    <name type="common">White-lipped pit viper</name>
    <name type="synonym">Cryptelytrops albolabris</name>
    <dbReference type="NCBI Taxonomy" id="8765"/>
    <lineage>
        <taxon>Eukaryota</taxon>
        <taxon>Metazoa</taxon>
        <taxon>Chordata</taxon>
        <taxon>Craniata</taxon>
        <taxon>Vertebrata</taxon>
        <taxon>Euteleostomi</taxon>
        <taxon>Lepidosauria</taxon>
        <taxon>Squamata</taxon>
        <taxon>Bifurcata</taxon>
        <taxon>Unidentata</taxon>
        <taxon>Episquamata</taxon>
        <taxon>Toxicofera</taxon>
        <taxon>Serpentes</taxon>
        <taxon>Colubroidea</taxon>
        <taxon>Viperidae</taxon>
        <taxon>Crotalinae</taxon>
        <taxon>Trimeresurus</taxon>
    </lineage>
</organism>
<protein>
    <recommendedName>
        <fullName>Snaclec alboaggregin-A subunit alpha</fullName>
    </recommendedName>
    <alternativeName>
        <fullName>50-kDa alboaggregin</fullName>
    </alternativeName>
    <alternativeName>
        <fullName>Alboaggregin-A subunit 1</fullName>
        <shortName>AL-A subunit 1</shortName>
    </alternativeName>
</protein>
<comment type="function">
    <text evidence="2 3 4 5">Potent platelet activator that aggregates platelets via both GPIbalpha (GP1BA) and GPVI (GP6). Induces a tyrosine phosphorylation profile in platelets that resembles this produced by collagen, involving the time dependent tyrosine phosphorylation of Fc receptor gamma chain (FCGR1A), phospholipase Cgamma2 (PLCG2), and LAT.</text>
</comment>
<comment type="subunit">
    <text>Heterotetramer of the subunits alpha, alpha', beta and beta'; disulfide-linked.</text>
</comment>
<comment type="subcellular location">
    <subcellularLocation>
        <location evidence="4">Secreted</location>
    </subcellularLocation>
</comment>
<comment type="tissue specificity">
    <text evidence="4">Expressed by the venom gland.</text>
</comment>
<comment type="similarity">
    <text evidence="6">Belongs to the snaclec family.</text>
</comment>
<feature type="chain" id="PRO_0000046708" description="Snaclec alboaggregin-A subunit alpha">
    <location>
        <begin position="1"/>
        <end position="131"/>
    </location>
</feature>
<feature type="domain" description="C-type lectin" evidence="1">
    <location>
        <begin position="1"/>
        <end position="131"/>
    </location>
</feature>
<feature type="disulfide bond" evidence="1">
    <location>
        <begin position="2"/>
        <end position="13"/>
    </location>
</feature>
<feature type="disulfide bond" evidence="1">
    <location>
        <begin position="30"/>
        <end position="127"/>
    </location>
</feature>
<feature type="disulfide bond" description="Interchain" evidence="1">
    <location>
        <position position="79"/>
    </location>
</feature>
<feature type="disulfide bond" evidence="1">
    <location>
        <begin position="102"/>
        <end position="119"/>
    </location>
</feature>
<keyword id="KW-0903">Direct protein sequencing</keyword>
<keyword id="KW-1015">Disulfide bond</keyword>
<keyword id="KW-1199">Hemostasis impairing toxin</keyword>
<keyword id="KW-1202">Platelet aggregation activating toxin</keyword>
<keyword id="KW-0964">Secreted</keyword>
<keyword id="KW-0800">Toxin</keyword>
<proteinExistence type="evidence at protein level"/>